<accession>Q13CX4</accession>
<gene>
    <name evidence="1" type="primary">atpF1</name>
    <name type="ordered locus">RPD_0827</name>
</gene>
<organism>
    <name type="scientific">Rhodopseudomonas palustris (strain BisB5)</name>
    <dbReference type="NCBI Taxonomy" id="316057"/>
    <lineage>
        <taxon>Bacteria</taxon>
        <taxon>Pseudomonadati</taxon>
        <taxon>Pseudomonadota</taxon>
        <taxon>Alphaproteobacteria</taxon>
        <taxon>Hyphomicrobiales</taxon>
        <taxon>Nitrobacteraceae</taxon>
        <taxon>Rhodopseudomonas</taxon>
    </lineage>
</organism>
<comment type="function">
    <text evidence="1">F(1)F(0) ATP synthase produces ATP from ADP in the presence of a proton or sodium gradient. F-type ATPases consist of two structural domains, F(1) containing the extramembraneous catalytic core and F(0) containing the membrane proton channel, linked together by a central stalk and a peripheral stalk. During catalysis, ATP synthesis in the catalytic domain of F(1) is coupled via a rotary mechanism of the central stalk subunits to proton translocation.</text>
</comment>
<comment type="function">
    <text evidence="1">Component of the F(0) channel, it forms part of the peripheral stalk, linking F(1) to F(0).</text>
</comment>
<comment type="subunit">
    <text evidence="1">F-type ATPases have 2 components, F(1) - the catalytic core - and F(0) - the membrane proton channel. F(1) has five subunits: alpha(3), beta(3), gamma(1), delta(1), epsilon(1). F(0) has three main subunits: a(1), b(2) and c(10-14). The alpha and beta chains form an alternating ring which encloses part of the gamma chain. F(1) is attached to F(0) by a central stalk formed by the gamma and epsilon chains, while a peripheral stalk is formed by the delta and b chains.</text>
</comment>
<comment type="subcellular location">
    <subcellularLocation>
        <location evidence="1">Cell inner membrane</location>
        <topology evidence="1">Single-pass membrane protein</topology>
    </subcellularLocation>
</comment>
<comment type="similarity">
    <text evidence="1">Belongs to the ATPase B chain family.</text>
</comment>
<name>ATPF1_RHOPS</name>
<reference key="1">
    <citation type="submission" date="2006-03" db="EMBL/GenBank/DDBJ databases">
        <title>Complete sequence of Rhodopseudomonas palustris BisB5.</title>
        <authorList>
            <consortium name="US DOE Joint Genome Institute"/>
            <person name="Copeland A."/>
            <person name="Lucas S."/>
            <person name="Lapidus A."/>
            <person name="Barry K."/>
            <person name="Detter J.C."/>
            <person name="Glavina del Rio T."/>
            <person name="Hammon N."/>
            <person name="Israni S."/>
            <person name="Dalin E."/>
            <person name="Tice H."/>
            <person name="Pitluck S."/>
            <person name="Chain P."/>
            <person name="Malfatti S."/>
            <person name="Shin M."/>
            <person name="Vergez L."/>
            <person name="Schmutz J."/>
            <person name="Larimer F."/>
            <person name="Land M."/>
            <person name="Hauser L."/>
            <person name="Pelletier D.A."/>
            <person name="Kyrpides N."/>
            <person name="Lykidis A."/>
            <person name="Oda Y."/>
            <person name="Harwood C.S."/>
            <person name="Richardson P."/>
        </authorList>
    </citation>
    <scope>NUCLEOTIDE SEQUENCE [LARGE SCALE GENOMIC DNA]</scope>
    <source>
        <strain>BisB5</strain>
    </source>
</reference>
<dbReference type="EMBL" id="CP000283">
    <property type="protein sequence ID" value="ABE38065.1"/>
    <property type="molecule type" value="Genomic_DNA"/>
</dbReference>
<dbReference type="SMR" id="Q13CX4"/>
<dbReference type="STRING" id="316057.RPD_0827"/>
<dbReference type="KEGG" id="rpd:RPD_0827"/>
<dbReference type="eggNOG" id="COG0711">
    <property type="taxonomic scope" value="Bacteria"/>
</dbReference>
<dbReference type="HOGENOM" id="CLU_079215_6_1_5"/>
<dbReference type="BioCyc" id="RPAL316057:RPD_RS04215-MONOMER"/>
<dbReference type="Proteomes" id="UP000001818">
    <property type="component" value="Chromosome"/>
</dbReference>
<dbReference type="GO" id="GO:0005886">
    <property type="term" value="C:plasma membrane"/>
    <property type="evidence" value="ECO:0007669"/>
    <property type="project" value="UniProtKB-SubCell"/>
</dbReference>
<dbReference type="GO" id="GO:0045259">
    <property type="term" value="C:proton-transporting ATP synthase complex"/>
    <property type="evidence" value="ECO:0007669"/>
    <property type="project" value="UniProtKB-KW"/>
</dbReference>
<dbReference type="GO" id="GO:0046933">
    <property type="term" value="F:proton-transporting ATP synthase activity, rotational mechanism"/>
    <property type="evidence" value="ECO:0007669"/>
    <property type="project" value="UniProtKB-UniRule"/>
</dbReference>
<dbReference type="GO" id="GO:0046961">
    <property type="term" value="F:proton-transporting ATPase activity, rotational mechanism"/>
    <property type="evidence" value="ECO:0007669"/>
    <property type="project" value="TreeGrafter"/>
</dbReference>
<dbReference type="CDD" id="cd06503">
    <property type="entry name" value="ATP-synt_Fo_b"/>
    <property type="match status" value="1"/>
</dbReference>
<dbReference type="HAMAP" id="MF_01398">
    <property type="entry name" value="ATP_synth_b_bprime"/>
    <property type="match status" value="1"/>
</dbReference>
<dbReference type="InterPro" id="IPR002146">
    <property type="entry name" value="ATP_synth_b/b'su_bac/chlpt"/>
</dbReference>
<dbReference type="InterPro" id="IPR050059">
    <property type="entry name" value="ATP_synthase_B_chain"/>
</dbReference>
<dbReference type="PANTHER" id="PTHR33445:SF1">
    <property type="entry name" value="ATP SYNTHASE SUBUNIT B"/>
    <property type="match status" value="1"/>
</dbReference>
<dbReference type="PANTHER" id="PTHR33445">
    <property type="entry name" value="ATP SYNTHASE SUBUNIT B', CHLOROPLASTIC"/>
    <property type="match status" value="1"/>
</dbReference>
<dbReference type="Pfam" id="PF00430">
    <property type="entry name" value="ATP-synt_B"/>
    <property type="match status" value="1"/>
</dbReference>
<evidence type="ECO:0000255" key="1">
    <source>
        <dbReference type="HAMAP-Rule" id="MF_01398"/>
    </source>
</evidence>
<protein>
    <recommendedName>
        <fullName evidence="1">ATP synthase subunit b 1</fullName>
    </recommendedName>
    <alternativeName>
        <fullName evidence="1">ATP synthase F(0) sector subunit b 1</fullName>
    </alternativeName>
    <alternativeName>
        <fullName evidence="1">ATPase subunit I 1</fullName>
    </alternativeName>
    <alternativeName>
        <fullName evidence="1">F-type ATPase subunit b 1</fullName>
        <shortName evidence="1">F-ATPase subunit b 1</shortName>
    </alternativeName>
</protein>
<proteinExistence type="inferred from homology"/>
<sequence length="163" mass="17520">MGIFAEAETWVAVAFVILMALFAYLGVHRTVLQALDNRRARIKAELDEARKLKDEAAKLLADYRARRAQAEREAEAIISSAKADAERIAAESKAKLEDFVARRTKTAESKIALAEAQAVADVRAAAAEAAVSAAATILSQSVKGQVADDLLGKGIQEVRSKLN</sequence>
<keyword id="KW-0066">ATP synthesis</keyword>
<keyword id="KW-0997">Cell inner membrane</keyword>
<keyword id="KW-1003">Cell membrane</keyword>
<keyword id="KW-0138">CF(0)</keyword>
<keyword id="KW-0375">Hydrogen ion transport</keyword>
<keyword id="KW-0406">Ion transport</keyword>
<keyword id="KW-0472">Membrane</keyword>
<keyword id="KW-0812">Transmembrane</keyword>
<keyword id="KW-1133">Transmembrane helix</keyword>
<keyword id="KW-0813">Transport</keyword>
<feature type="chain" id="PRO_0000368723" description="ATP synthase subunit b 1">
    <location>
        <begin position="1"/>
        <end position="163"/>
    </location>
</feature>
<feature type="transmembrane region" description="Helical" evidence="1">
    <location>
        <begin position="7"/>
        <end position="27"/>
    </location>
</feature>